<keyword id="KW-0963">Cytoplasm</keyword>
<keyword id="KW-0413">Isomerase</keyword>
<keyword id="KW-0464">Manganese</keyword>
<keyword id="KW-0479">Metal-binding</keyword>
<comment type="function">
    <text evidence="1">Isomerase that catalyzes the conversion of deoxy-ribose 1-phosphate (dRib-1-P) and ribose 1-phosphate (Rib-1-P) to deoxy-ribose 5-phosphate (dRib-5-P) and ribose 5-phosphate (Rib-5-P), respectively.</text>
</comment>
<comment type="catalytic activity">
    <reaction evidence="1">
        <text>2-deoxy-alpha-D-ribose 1-phosphate = 2-deoxy-D-ribose 5-phosphate</text>
        <dbReference type="Rhea" id="RHEA:27658"/>
        <dbReference type="ChEBI" id="CHEBI:57259"/>
        <dbReference type="ChEBI" id="CHEBI:62877"/>
        <dbReference type="EC" id="5.4.2.7"/>
    </reaction>
</comment>
<comment type="catalytic activity">
    <reaction evidence="1">
        <text>alpha-D-ribose 1-phosphate = D-ribose 5-phosphate</text>
        <dbReference type="Rhea" id="RHEA:18793"/>
        <dbReference type="ChEBI" id="CHEBI:57720"/>
        <dbReference type="ChEBI" id="CHEBI:78346"/>
        <dbReference type="EC" id="5.4.2.7"/>
    </reaction>
</comment>
<comment type="cofactor">
    <cofactor evidence="1">
        <name>Mn(2+)</name>
        <dbReference type="ChEBI" id="CHEBI:29035"/>
    </cofactor>
    <text evidence="1">Binds 2 manganese ions.</text>
</comment>
<comment type="pathway">
    <text evidence="1">Carbohydrate degradation; 2-deoxy-D-ribose 1-phosphate degradation; D-glyceraldehyde 3-phosphate and acetaldehyde from 2-deoxy-alpha-D-ribose 1-phosphate: step 1/2.</text>
</comment>
<comment type="subcellular location">
    <subcellularLocation>
        <location evidence="1">Cytoplasm</location>
    </subcellularLocation>
</comment>
<comment type="similarity">
    <text evidence="1">Belongs to the phosphopentomutase family.</text>
</comment>
<dbReference type="EC" id="5.4.2.7" evidence="1"/>
<dbReference type="EMBL" id="CP001215">
    <property type="protein sequence ID" value="ACP14669.1"/>
    <property type="molecule type" value="Genomic_DNA"/>
</dbReference>
<dbReference type="RefSeq" id="WP_001046068.1">
    <property type="nucleotide sequence ID" value="NC_012581.1"/>
</dbReference>
<dbReference type="SMR" id="C3LIV3"/>
<dbReference type="GeneID" id="45023977"/>
<dbReference type="KEGG" id="bah:BAMEG_4348"/>
<dbReference type="HOGENOM" id="CLU_053861_0_0_9"/>
<dbReference type="UniPathway" id="UPA00002">
    <property type="reaction ID" value="UER00467"/>
</dbReference>
<dbReference type="GO" id="GO:0005829">
    <property type="term" value="C:cytosol"/>
    <property type="evidence" value="ECO:0007669"/>
    <property type="project" value="TreeGrafter"/>
</dbReference>
<dbReference type="GO" id="GO:0000287">
    <property type="term" value="F:magnesium ion binding"/>
    <property type="evidence" value="ECO:0007669"/>
    <property type="project" value="InterPro"/>
</dbReference>
<dbReference type="GO" id="GO:0030145">
    <property type="term" value="F:manganese ion binding"/>
    <property type="evidence" value="ECO:0007669"/>
    <property type="project" value="UniProtKB-UniRule"/>
</dbReference>
<dbReference type="GO" id="GO:0008973">
    <property type="term" value="F:phosphopentomutase activity"/>
    <property type="evidence" value="ECO:0007669"/>
    <property type="project" value="UniProtKB-UniRule"/>
</dbReference>
<dbReference type="GO" id="GO:0006018">
    <property type="term" value="P:2-deoxyribose 1-phosphate catabolic process"/>
    <property type="evidence" value="ECO:0007669"/>
    <property type="project" value="UniProtKB-UniRule"/>
</dbReference>
<dbReference type="GO" id="GO:0006015">
    <property type="term" value="P:5-phosphoribose 1-diphosphate biosynthetic process"/>
    <property type="evidence" value="ECO:0007669"/>
    <property type="project" value="UniProtKB-UniPathway"/>
</dbReference>
<dbReference type="GO" id="GO:0043094">
    <property type="term" value="P:metabolic compound salvage"/>
    <property type="evidence" value="ECO:0007669"/>
    <property type="project" value="InterPro"/>
</dbReference>
<dbReference type="GO" id="GO:0009117">
    <property type="term" value="P:nucleotide metabolic process"/>
    <property type="evidence" value="ECO:0007669"/>
    <property type="project" value="InterPro"/>
</dbReference>
<dbReference type="CDD" id="cd16009">
    <property type="entry name" value="PPM"/>
    <property type="match status" value="1"/>
</dbReference>
<dbReference type="FunFam" id="3.30.70.1250:FF:000001">
    <property type="entry name" value="Phosphopentomutase"/>
    <property type="match status" value="1"/>
</dbReference>
<dbReference type="Gene3D" id="3.40.720.10">
    <property type="entry name" value="Alkaline Phosphatase, subunit A"/>
    <property type="match status" value="1"/>
</dbReference>
<dbReference type="Gene3D" id="3.30.70.1250">
    <property type="entry name" value="Phosphopentomutase"/>
    <property type="match status" value="1"/>
</dbReference>
<dbReference type="HAMAP" id="MF_00740">
    <property type="entry name" value="Phosphopentomut"/>
    <property type="match status" value="1"/>
</dbReference>
<dbReference type="InterPro" id="IPR017850">
    <property type="entry name" value="Alkaline_phosphatase_core_sf"/>
</dbReference>
<dbReference type="InterPro" id="IPR010045">
    <property type="entry name" value="DeoB"/>
</dbReference>
<dbReference type="InterPro" id="IPR006124">
    <property type="entry name" value="Metalloenzyme"/>
</dbReference>
<dbReference type="InterPro" id="IPR024052">
    <property type="entry name" value="Phosphopentomutase_DeoB_cap_sf"/>
</dbReference>
<dbReference type="NCBIfam" id="TIGR01696">
    <property type="entry name" value="deoB"/>
    <property type="match status" value="1"/>
</dbReference>
<dbReference type="NCBIfam" id="NF003766">
    <property type="entry name" value="PRK05362.1"/>
    <property type="match status" value="1"/>
</dbReference>
<dbReference type="PANTHER" id="PTHR21110">
    <property type="entry name" value="PHOSPHOPENTOMUTASE"/>
    <property type="match status" value="1"/>
</dbReference>
<dbReference type="PANTHER" id="PTHR21110:SF0">
    <property type="entry name" value="PHOSPHOPENTOMUTASE"/>
    <property type="match status" value="1"/>
</dbReference>
<dbReference type="Pfam" id="PF01676">
    <property type="entry name" value="Metalloenzyme"/>
    <property type="match status" value="1"/>
</dbReference>
<dbReference type="PIRSF" id="PIRSF001491">
    <property type="entry name" value="Ppentomutase"/>
    <property type="match status" value="1"/>
</dbReference>
<dbReference type="SUPFAM" id="SSF53649">
    <property type="entry name" value="Alkaline phosphatase-like"/>
    <property type="match status" value="1"/>
</dbReference>
<dbReference type="SUPFAM" id="SSF143856">
    <property type="entry name" value="DeoB insert domain-like"/>
    <property type="match status" value="1"/>
</dbReference>
<feature type="chain" id="PRO_1000189772" description="Phosphopentomutase">
    <location>
        <begin position="1"/>
        <end position="394"/>
    </location>
</feature>
<feature type="binding site" evidence="1">
    <location>
        <position position="13"/>
    </location>
    <ligand>
        <name>Mn(2+)</name>
        <dbReference type="ChEBI" id="CHEBI:29035"/>
        <label>1</label>
    </ligand>
</feature>
<feature type="binding site" evidence="1">
    <location>
        <position position="286"/>
    </location>
    <ligand>
        <name>Mn(2+)</name>
        <dbReference type="ChEBI" id="CHEBI:29035"/>
        <label>2</label>
    </ligand>
</feature>
<feature type="binding site" evidence="1">
    <location>
        <position position="291"/>
    </location>
    <ligand>
        <name>Mn(2+)</name>
        <dbReference type="ChEBI" id="CHEBI:29035"/>
        <label>2</label>
    </ligand>
</feature>
<feature type="binding site" evidence="1">
    <location>
        <position position="327"/>
    </location>
    <ligand>
        <name>Mn(2+)</name>
        <dbReference type="ChEBI" id="CHEBI:29035"/>
        <label>1</label>
    </ligand>
</feature>
<feature type="binding site" evidence="1">
    <location>
        <position position="328"/>
    </location>
    <ligand>
        <name>Mn(2+)</name>
        <dbReference type="ChEBI" id="CHEBI:29035"/>
        <label>1</label>
    </ligand>
</feature>
<feature type="binding site" evidence="1">
    <location>
        <position position="339"/>
    </location>
    <ligand>
        <name>Mn(2+)</name>
        <dbReference type="ChEBI" id="CHEBI:29035"/>
        <label>2</label>
    </ligand>
</feature>
<gene>
    <name evidence="1" type="primary">deoB</name>
    <name type="ordered locus">BAMEG_4348</name>
</gene>
<accession>C3LIV3</accession>
<organism>
    <name type="scientific">Bacillus anthracis (strain CDC 684 / NRRL 3495)</name>
    <dbReference type="NCBI Taxonomy" id="568206"/>
    <lineage>
        <taxon>Bacteria</taxon>
        <taxon>Bacillati</taxon>
        <taxon>Bacillota</taxon>
        <taxon>Bacilli</taxon>
        <taxon>Bacillales</taxon>
        <taxon>Bacillaceae</taxon>
        <taxon>Bacillus</taxon>
        <taxon>Bacillus cereus group</taxon>
    </lineage>
</organism>
<reference key="1">
    <citation type="submission" date="2008-10" db="EMBL/GenBank/DDBJ databases">
        <title>Genome sequence of Bacillus anthracis str. CDC 684.</title>
        <authorList>
            <person name="Dodson R.J."/>
            <person name="Munk A.C."/>
            <person name="Brettin T."/>
            <person name="Bruce D."/>
            <person name="Detter C."/>
            <person name="Tapia R."/>
            <person name="Han C."/>
            <person name="Sutton G."/>
            <person name="Sims D."/>
        </authorList>
    </citation>
    <scope>NUCLEOTIDE SEQUENCE [LARGE SCALE GENOMIC DNA]</scope>
    <source>
        <strain>CDC 684 / NRRL 3495</strain>
    </source>
</reference>
<proteinExistence type="inferred from homology"/>
<sequence>MNKYKRIFLVVMDSVGIGEAPDAEQFGDLGSDTIGHIAEHMNGLHMPNMVKLGLGNIREMKGISKVEKPLGYYTKMQEKSTGKDTMTGHWEIMGLYIDTPFQVFPEGFPKELLDELEEKTGRKIIGNKPASGTEILDELGQEQMETGSLIVYTSADSVLQIAAHEEVVPLDELYKICKIARELTLDEKYMVGRVIARPFVGEPGNFTRTPNRHDYALKPFGRTVMNELKDSDYDVIAIGKISDIYDGEGVTESLRTKSNMDGMDKVVDTLNMDFTGLSFLNLVDFDALFGHRRDPQGYGEALQEYDARLPEVFEKLKEDDLLLITADHGNDPVHHGTDHTREYVPLLAYSPSMKEGGQELPLRQTFADIGATVAENFGVKMPEYGTSFLNELKK</sequence>
<protein>
    <recommendedName>
        <fullName evidence="1">Phosphopentomutase</fullName>
        <ecNumber evidence="1">5.4.2.7</ecNumber>
    </recommendedName>
    <alternativeName>
        <fullName evidence="1">Phosphodeoxyribomutase</fullName>
    </alternativeName>
</protein>
<name>DEOB_BACAC</name>
<evidence type="ECO:0000255" key="1">
    <source>
        <dbReference type="HAMAP-Rule" id="MF_00740"/>
    </source>
</evidence>